<comment type="catalytic activity">
    <reaction evidence="1">
        <text>(2R)-3-phosphoglycerate + ATP = (2R)-3-phospho-glyceroyl phosphate + ADP</text>
        <dbReference type="Rhea" id="RHEA:14801"/>
        <dbReference type="ChEBI" id="CHEBI:30616"/>
        <dbReference type="ChEBI" id="CHEBI:57604"/>
        <dbReference type="ChEBI" id="CHEBI:58272"/>
        <dbReference type="ChEBI" id="CHEBI:456216"/>
        <dbReference type="EC" id="2.7.2.3"/>
    </reaction>
</comment>
<comment type="pathway">
    <text evidence="1">Carbohydrate degradation; glycolysis; pyruvate from D-glyceraldehyde 3-phosphate: step 2/5.</text>
</comment>
<comment type="subunit">
    <text evidence="1">Monomer.</text>
</comment>
<comment type="subcellular location">
    <subcellularLocation>
        <location evidence="1">Cytoplasm</location>
    </subcellularLocation>
</comment>
<comment type="similarity">
    <text evidence="1">Belongs to the phosphoglycerate kinase family.</text>
</comment>
<organism>
    <name type="scientific">Synechococcus sp. (strain JA-3-3Ab)</name>
    <name type="common">Cyanobacteria bacterium Yellowstone A-Prime</name>
    <dbReference type="NCBI Taxonomy" id="321327"/>
    <lineage>
        <taxon>Bacteria</taxon>
        <taxon>Bacillati</taxon>
        <taxon>Cyanobacteriota</taxon>
        <taxon>Cyanophyceae</taxon>
        <taxon>Synechococcales</taxon>
        <taxon>Synechococcaceae</taxon>
        <taxon>Synechococcus</taxon>
    </lineage>
</organism>
<dbReference type="EC" id="2.7.2.3" evidence="1"/>
<dbReference type="EMBL" id="CP000239">
    <property type="protein sequence ID" value="ABC98536.1"/>
    <property type="molecule type" value="Genomic_DNA"/>
</dbReference>
<dbReference type="RefSeq" id="WP_011429225.1">
    <property type="nucleotide sequence ID" value="NC_007775.1"/>
</dbReference>
<dbReference type="SMR" id="Q2JXF0"/>
<dbReference type="STRING" id="321327.CYA_0315"/>
<dbReference type="KEGG" id="cya:CYA_0315"/>
<dbReference type="eggNOG" id="COG0126">
    <property type="taxonomic scope" value="Bacteria"/>
</dbReference>
<dbReference type="HOGENOM" id="CLU_025427_0_1_3"/>
<dbReference type="OrthoDB" id="9808460at2"/>
<dbReference type="UniPathway" id="UPA00109">
    <property type="reaction ID" value="UER00185"/>
</dbReference>
<dbReference type="Proteomes" id="UP000008818">
    <property type="component" value="Chromosome"/>
</dbReference>
<dbReference type="GO" id="GO:0005829">
    <property type="term" value="C:cytosol"/>
    <property type="evidence" value="ECO:0007669"/>
    <property type="project" value="TreeGrafter"/>
</dbReference>
<dbReference type="GO" id="GO:0043531">
    <property type="term" value="F:ADP binding"/>
    <property type="evidence" value="ECO:0007669"/>
    <property type="project" value="TreeGrafter"/>
</dbReference>
<dbReference type="GO" id="GO:0005524">
    <property type="term" value="F:ATP binding"/>
    <property type="evidence" value="ECO:0007669"/>
    <property type="project" value="UniProtKB-KW"/>
</dbReference>
<dbReference type="GO" id="GO:0004618">
    <property type="term" value="F:phosphoglycerate kinase activity"/>
    <property type="evidence" value="ECO:0007669"/>
    <property type="project" value="UniProtKB-UniRule"/>
</dbReference>
<dbReference type="GO" id="GO:0006094">
    <property type="term" value="P:gluconeogenesis"/>
    <property type="evidence" value="ECO:0007669"/>
    <property type="project" value="TreeGrafter"/>
</dbReference>
<dbReference type="GO" id="GO:0006096">
    <property type="term" value="P:glycolytic process"/>
    <property type="evidence" value="ECO:0007669"/>
    <property type="project" value="UniProtKB-UniRule"/>
</dbReference>
<dbReference type="CDD" id="cd00318">
    <property type="entry name" value="Phosphoglycerate_kinase"/>
    <property type="match status" value="1"/>
</dbReference>
<dbReference type="FunFam" id="3.40.50.1260:FF:000003">
    <property type="entry name" value="Phosphoglycerate kinase"/>
    <property type="match status" value="1"/>
</dbReference>
<dbReference type="FunFam" id="3.40.50.1260:FF:000006">
    <property type="entry name" value="Phosphoglycerate kinase"/>
    <property type="match status" value="1"/>
</dbReference>
<dbReference type="Gene3D" id="3.40.50.1260">
    <property type="entry name" value="Phosphoglycerate kinase, N-terminal domain"/>
    <property type="match status" value="2"/>
</dbReference>
<dbReference type="HAMAP" id="MF_00145">
    <property type="entry name" value="Phosphoglyc_kinase"/>
    <property type="match status" value="1"/>
</dbReference>
<dbReference type="InterPro" id="IPR001576">
    <property type="entry name" value="Phosphoglycerate_kinase"/>
</dbReference>
<dbReference type="InterPro" id="IPR015911">
    <property type="entry name" value="Phosphoglycerate_kinase_CS"/>
</dbReference>
<dbReference type="InterPro" id="IPR015824">
    <property type="entry name" value="Phosphoglycerate_kinase_N"/>
</dbReference>
<dbReference type="InterPro" id="IPR036043">
    <property type="entry name" value="Phosphoglycerate_kinase_sf"/>
</dbReference>
<dbReference type="PANTHER" id="PTHR11406">
    <property type="entry name" value="PHOSPHOGLYCERATE KINASE"/>
    <property type="match status" value="1"/>
</dbReference>
<dbReference type="PANTHER" id="PTHR11406:SF23">
    <property type="entry name" value="PHOSPHOGLYCERATE KINASE 1, CHLOROPLASTIC-RELATED"/>
    <property type="match status" value="1"/>
</dbReference>
<dbReference type="Pfam" id="PF00162">
    <property type="entry name" value="PGK"/>
    <property type="match status" value="1"/>
</dbReference>
<dbReference type="PIRSF" id="PIRSF000724">
    <property type="entry name" value="Pgk"/>
    <property type="match status" value="1"/>
</dbReference>
<dbReference type="PRINTS" id="PR00477">
    <property type="entry name" value="PHGLYCKINASE"/>
</dbReference>
<dbReference type="SUPFAM" id="SSF53748">
    <property type="entry name" value="Phosphoglycerate kinase"/>
    <property type="match status" value="1"/>
</dbReference>
<dbReference type="PROSITE" id="PS00111">
    <property type="entry name" value="PGLYCERATE_KINASE"/>
    <property type="match status" value="1"/>
</dbReference>
<evidence type="ECO:0000255" key="1">
    <source>
        <dbReference type="HAMAP-Rule" id="MF_00145"/>
    </source>
</evidence>
<gene>
    <name evidence="1" type="primary">pgk</name>
    <name type="ordered locus">CYA_0315</name>
</gene>
<sequence length="412" mass="43225">MAKQTLGSLLSSGFDLKGKRVLVRADFNVPLDPQGNITDDTRIRASLPTIQALAQAGAKVILTSHLGRPIQKDKATGAIQIAREGNSLAPVAVRLAQLLGQPVAFAPDCIGPEAEAVVSSLENGQVALLENVRFHPEEEANDPEFARKLASLADLFVNDAFGSAHRAHASTAGVTAYLQPAVAGYLVEKELQFLSGAIENPQRPLAAIIGGSKVSTKIGVIERLLEKVDKLLLGGGMIFTFYQAQGIPTGKSLVETDKLDLARSLMEKAKARGVELLLPVDVVVADRFDKDANAQTVSIHAIPEDWMGLDIGPESVKAFQAALQGCKTVVWNGPMGVFEFDRFAAGTEAIARTLADLTQAGAITIIGGGDSVAAVEKVGLADKMTHISTGGGASLELLEGKELPGIAALSEA</sequence>
<protein>
    <recommendedName>
        <fullName evidence="1">Phosphoglycerate kinase</fullName>
        <ecNumber evidence="1">2.7.2.3</ecNumber>
    </recommendedName>
</protein>
<keyword id="KW-0067">ATP-binding</keyword>
<keyword id="KW-0963">Cytoplasm</keyword>
<keyword id="KW-0324">Glycolysis</keyword>
<keyword id="KW-0418">Kinase</keyword>
<keyword id="KW-0547">Nucleotide-binding</keyword>
<keyword id="KW-0808">Transferase</keyword>
<feature type="chain" id="PRO_1000058075" description="Phosphoglycerate kinase">
    <location>
        <begin position="1"/>
        <end position="412"/>
    </location>
</feature>
<feature type="binding site" evidence="1">
    <location>
        <begin position="26"/>
        <end position="28"/>
    </location>
    <ligand>
        <name>substrate</name>
    </ligand>
</feature>
<feature type="binding site" evidence="1">
    <location>
        <position position="42"/>
    </location>
    <ligand>
        <name>substrate</name>
    </ligand>
</feature>
<feature type="binding site" evidence="1">
    <location>
        <begin position="65"/>
        <end position="68"/>
    </location>
    <ligand>
        <name>substrate</name>
    </ligand>
</feature>
<feature type="binding site" evidence="1">
    <location>
        <position position="133"/>
    </location>
    <ligand>
        <name>substrate</name>
    </ligand>
</feature>
<feature type="binding site" evidence="1">
    <location>
        <position position="166"/>
    </location>
    <ligand>
        <name>substrate</name>
    </ligand>
</feature>
<feature type="binding site" evidence="1">
    <location>
        <position position="217"/>
    </location>
    <ligand>
        <name>ATP</name>
        <dbReference type="ChEBI" id="CHEBI:30616"/>
    </ligand>
</feature>
<feature type="binding site" evidence="1">
    <location>
        <position position="308"/>
    </location>
    <ligand>
        <name>ATP</name>
        <dbReference type="ChEBI" id="CHEBI:30616"/>
    </ligand>
</feature>
<feature type="binding site" evidence="1">
    <location>
        <position position="339"/>
    </location>
    <ligand>
        <name>ATP</name>
        <dbReference type="ChEBI" id="CHEBI:30616"/>
    </ligand>
</feature>
<feature type="binding site" evidence="1">
    <location>
        <begin position="368"/>
        <end position="371"/>
    </location>
    <ligand>
        <name>ATP</name>
        <dbReference type="ChEBI" id="CHEBI:30616"/>
    </ligand>
</feature>
<reference key="1">
    <citation type="journal article" date="2007" name="ISME J.">
        <title>Population level functional diversity in a microbial community revealed by comparative genomic and metagenomic analyses.</title>
        <authorList>
            <person name="Bhaya D."/>
            <person name="Grossman A.R."/>
            <person name="Steunou A.-S."/>
            <person name="Khuri N."/>
            <person name="Cohan F.M."/>
            <person name="Hamamura N."/>
            <person name="Melendrez M.C."/>
            <person name="Bateson M.M."/>
            <person name="Ward D.M."/>
            <person name="Heidelberg J.F."/>
        </authorList>
    </citation>
    <scope>NUCLEOTIDE SEQUENCE [LARGE SCALE GENOMIC DNA]</scope>
    <source>
        <strain>JA-3-3Ab</strain>
    </source>
</reference>
<name>PGK_SYNJA</name>
<proteinExistence type="inferred from homology"/>
<accession>Q2JXF0</accession>